<keyword id="KW-0170">Cobalt</keyword>
<keyword id="KW-0479">Metal-binding</keyword>
<keyword id="KW-0484">Methanogenesis</keyword>
<keyword id="KW-0677">Repeat</keyword>
<evidence type="ECO:0000250" key="1"/>
<evidence type="ECO:0000255" key="2">
    <source>
        <dbReference type="PROSITE-ProRule" id="PRU00666"/>
    </source>
</evidence>
<evidence type="ECO:0000255" key="3">
    <source>
        <dbReference type="PROSITE-ProRule" id="PRU00667"/>
    </source>
</evidence>
<evidence type="ECO:0000305" key="4"/>
<feature type="initiator methionine" description="Removed" evidence="1">
    <location>
        <position position="1"/>
    </location>
</feature>
<feature type="chain" id="PRO_0000216471" description="Monomethylamine corrinoid protein 1">
    <location>
        <begin position="2"/>
        <end position="218"/>
    </location>
</feature>
<feature type="domain" description="B12-binding N-terminal" evidence="3">
    <location>
        <begin position="1"/>
        <end position="91"/>
    </location>
</feature>
<feature type="domain" description="B12-binding" evidence="2">
    <location>
        <begin position="94"/>
        <end position="218"/>
    </location>
</feature>
<feature type="binding site" description="axial binding residue" evidence="1">
    <location>
        <position position="107"/>
    </location>
    <ligand>
        <name>methylcob(III)alamin</name>
        <dbReference type="ChEBI" id="CHEBI:28115"/>
    </ligand>
    <ligandPart>
        <name>Co</name>
        <dbReference type="ChEBI" id="CHEBI:27638"/>
    </ligandPart>
</feature>
<reference key="1">
    <citation type="journal article" date="2002" name="J. Mol. Microbiol. Biotechnol.">
        <title>The genome of Methanosarcina mazei: evidence for lateral gene transfer between Bacteria and Archaea.</title>
        <authorList>
            <person name="Deppenmeier U."/>
            <person name="Johann A."/>
            <person name="Hartsch T."/>
            <person name="Merkl R."/>
            <person name="Schmitz R.A."/>
            <person name="Martinez-Arias R."/>
            <person name="Henne A."/>
            <person name="Wiezer A."/>
            <person name="Baeumer S."/>
            <person name="Jacobi C."/>
            <person name="Brueggemann H."/>
            <person name="Lienard T."/>
            <person name="Christmann A."/>
            <person name="Boemecke M."/>
            <person name="Steckel S."/>
            <person name="Bhattacharyya A."/>
            <person name="Lykidis A."/>
            <person name="Overbeek R."/>
            <person name="Klenk H.-P."/>
            <person name="Gunsalus R.P."/>
            <person name="Fritz H.-J."/>
            <person name="Gottschalk G."/>
        </authorList>
    </citation>
    <scope>NUCLEOTIDE SEQUENCE [LARGE SCALE GENOMIC DNA]</scope>
    <source>
        <strain>ATCC BAA-159 / DSM 3647 / Goe1 / Go1 / JCM 11833 / OCM 88</strain>
    </source>
</reference>
<dbReference type="EMBL" id="AE008384">
    <property type="protein sequence ID" value="AAM31134.1"/>
    <property type="status" value="ALT_INIT"/>
    <property type="molecule type" value="Genomic_DNA"/>
</dbReference>
<dbReference type="RefSeq" id="WP_048041216.1">
    <property type="nucleotide sequence ID" value="NC_003901.1"/>
</dbReference>
<dbReference type="SMR" id="P58977"/>
<dbReference type="KEGG" id="mma:MM_1438"/>
<dbReference type="PATRIC" id="fig|192952.21.peg.1664"/>
<dbReference type="eggNOG" id="arCOG02031">
    <property type="taxonomic scope" value="Archaea"/>
</dbReference>
<dbReference type="HOGENOM" id="CLU_082102_1_0_2"/>
<dbReference type="UniPathway" id="UPA00643"/>
<dbReference type="Proteomes" id="UP000000595">
    <property type="component" value="Chromosome"/>
</dbReference>
<dbReference type="GO" id="GO:0005829">
    <property type="term" value="C:cytosol"/>
    <property type="evidence" value="ECO:0007669"/>
    <property type="project" value="TreeGrafter"/>
</dbReference>
<dbReference type="GO" id="GO:0031419">
    <property type="term" value="F:cobalamin binding"/>
    <property type="evidence" value="ECO:0007669"/>
    <property type="project" value="InterPro"/>
</dbReference>
<dbReference type="GO" id="GO:0050897">
    <property type="term" value="F:cobalt ion binding"/>
    <property type="evidence" value="ECO:0007669"/>
    <property type="project" value="InterPro"/>
</dbReference>
<dbReference type="GO" id="GO:0008705">
    <property type="term" value="F:methionine synthase activity"/>
    <property type="evidence" value="ECO:0007669"/>
    <property type="project" value="TreeGrafter"/>
</dbReference>
<dbReference type="GO" id="GO:0050667">
    <property type="term" value="P:homocysteine metabolic process"/>
    <property type="evidence" value="ECO:0007669"/>
    <property type="project" value="TreeGrafter"/>
</dbReference>
<dbReference type="GO" id="GO:0015948">
    <property type="term" value="P:methanogenesis"/>
    <property type="evidence" value="ECO:0007669"/>
    <property type="project" value="UniProtKB-KW"/>
</dbReference>
<dbReference type="GO" id="GO:0046653">
    <property type="term" value="P:tetrahydrofolate metabolic process"/>
    <property type="evidence" value="ECO:0007669"/>
    <property type="project" value="TreeGrafter"/>
</dbReference>
<dbReference type="CDD" id="cd02070">
    <property type="entry name" value="corrinoid_protein_B12-BD"/>
    <property type="match status" value="1"/>
</dbReference>
<dbReference type="FunFam" id="3.40.50.280:FF:000007">
    <property type="entry name" value="Monomethylamine corrinoid protein 1"/>
    <property type="match status" value="1"/>
</dbReference>
<dbReference type="FunFam" id="1.10.1240.10:FF:000004">
    <property type="entry name" value="Monomethylamine methyltransferase corrinoid protein"/>
    <property type="match status" value="1"/>
</dbReference>
<dbReference type="Gene3D" id="3.40.50.280">
    <property type="entry name" value="Cobalamin-binding domain"/>
    <property type="match status" value="1"/>
</dbReference>
<dbReference type="Gene3D" id="1.10.1240.10">
    <property type="entry name" value="Methionine synthase domain"/>
    <property type="match status" value="1"/>
</dbReference>
<dbReference type="InterPro" id="IPR003759">
    <property type="entry name" value="Cbl-bd_cap"/>
</dbReference>
<dbReference type="InterPro" id="IPR006158">
    <property type="entry name" value="Cobalamin-bd"/>
</dbReference>
<dbReference type="InterPro" id="IPR036724">
    <property type="entry name" value="Cobalamin-bd_sf"/>
</dbReference>
<dbReference type="InterPro" id="IPR012741">
    <property type="entry name" value="Corrinoid_p"/>
</dbReference>
<dbReference type="InterPro" id="IPR050554">
    <property type="entry name" value="Met_Synthase/Corrinoid"/>
</dbReference>
<dbReference type="InterPro" id="IPR036594">
    <property type="entry name" value="Meth_synthase_dom"/>
</dbReference>
<dbReference type="NCBIfam" id="TIGR02370">
    <property type="entry name" value="pyl_corrinoid"/>
    <property type="match status" value="1"/>
</dbReference>
<dbReference type="PANTHER" id="PTHR45833">
    <property type="entry name" value="METHIONINE SYNTHASE"/>
    <property type="match status" value="1"/>
</dbReference>
<dbReference type="PANTHER" id="PTHR45833:SF1">
    <property type="entry name" value="METHIONINE SYNTHASE"/>
    <property type="match status" value="1"/>
</dbReference>
<dbReference type="Pfam" id="PF02310">
    <property type="entry name" value="B12-binding"/>
    <property type="match status" value="1"/>
</dbReference>
<dbReference type="Pfam" id="PF02607">
    <property type="entry name" value="B12-binding_2"/>
    <property type="match status" value="1"/>
</dbReference>
<dbReference type="SMART" id="SM01018">
    <property type="entry name" value="B12-binding_2"/>
    <property type="match status" value="1"/>
</dbReference>
<dbReference type="SUPFAM" id="SSF52242">
    <property type="entry name" value="Cobalamin (vitamin B12)-binding domain"/>
    <property type="match status" value="1"/>
</dbReference>
<dbReference type="SUPFAM" id="SSF47644">
    <property type="entry name" value="Methionine synthase domain"/>
    <property type="match status" value="1"/>
</dbReference>
<dbReference type="PROSITE" id="PS51332">
    <property type="entry name" value="B12_BINDING"/>
    <property type="match status" value="1"/>
</dbReference>
<dbReference type="PROSITE" id="PS51337">
    <property type="entry name" value="B12_BINDING_NTER"/>
    <property type="match status" value="1"/>
</dbReference>
<organism>
    <name type="scientific">Methanosarcina mazei (strain ATCC BAA-159 / DSM 3647 / Goe1 / Go1 / JCM 11833 / OCM 88)</name>
    <name type="common">Methanosarcina frisia</name>
    <dbReference type="NCBI Taxonomy" id="192952"/>
    <lineage>
        <taxon>Archaea</taxon>
        <taxon>Methanobacteriati</taxon>
        <taxon>Methanobacteriota</taxon>
        <taxon>Stenosarchaea group</taxon>
        <taxon>Methanomicrobia</taxon>
        <taxon>Methanosarcinales</taxon>
        <taxon>Methanosarcinaceae</taxon>
        <taxon>Methanosarcina</taxon>
    </lineage>
</organism>
<proteinExistence type="inferred from homology"/>
<gene>
    <name type="primary">mtmC1</name>
    <name type="ordered locus">MM_1438</name>
</gene>
<comment type="function">
    <text evidence="1">Acts as a methyl group carrier between MtmB and MtbA.</text>
</comment>
<comment type="pathway">
    <text>One-carbon metabolism; methanogenesis from methylamine.</text>
</comment>
<comment type="subunit">
    <text evidence="1">Can form a complex with MtmB.</text>
</comment>
<comment type="similarity">
    <text evidence="4">Belongs to the methylamine corrinoid protein family.</text>
</comment>
<comment type="sequence caution" evidence="4">
    <conflict type="erroneous initiation">
        <sequence resource="EMBL-CDS" id="AAM31134"/>
    </conflict>
</comment>
<sequence length="218" mass="23282">MANQEIFDKLTNAIVTQDIAGCAKLTQEALDAGISPLDIITKGLSPGMKIIGDKFEAAEIFLPQIMMSGKAMSSAMEILTPELEKTKVEGEEGTGLAITFVAEGDIHDIGHRLVTTMLGANGFDILDLGVDVLNETVIEEAAKRKGQKIILVGSALMTTSMLGQKDLMDRLREENLRDSVKCMFGGAPVSDKWIDEIGADATAENAAEAAKVALNIMK</sequence>
<name>MTMC1_METMA</name>
<protein>
    <recommendedName>
        <fullName>Monomethylamine corrinoid protein 1</fullName>
        <shortName>MMCP 1</shortName>
    </recommendedName>
</protein>
<accession>P58977</accession>